<keyword id="KW-0004">4Fe-4S</keyword>
<keyword id="KW-0997">Cell inner membrane</keyword>
<keyword id="KW-1003">Cell membrane</keyword>
<keyword id="KW-0408">Iron</keyword>
<keyword id="KW-0411">Iron-sulfur</keyword>
<keyword id="KW-0472">Membrane</keyword>
<keyword id="KW-0479">Metal-binding</keyword>
<keyword id="KW-0520">NAD</keyword>
<keyword id="KW-0874">Quinone</keyword>
<keyword id="KW-1185">Reference proteome</keyword>
<keyword id="KW-1278">Translocase</keyword>
<keyword id="KW-0813">Transport</keyword>
<keyword id="KW-0830">Ubiquinone</keyword>
<comment type="function">
    <text evidence="1">NDH-1 shuttles electrons from NADH, via FMN and iron-sulfur (Fe-S) centers, to quinones in the respiratory chain. Couples the redox reaction to proton translocation (for every two electrons transferred, four hydrogen ions are translocated across the cytoplasmic membrane), and thus conserves the redox energy in a proton gradient (By similarity).</text>
</comment>
<comment type="catalytic activity">
    <reaction evidence="2">
        <text>a quinone + NADH + 5 H(+)(in) = a quinol + NAD(+) + 4 H(+)(out)</text>
        <dbReference type="Rhea" id="RHEA:57888"/>
        <dbReference type="ChEBI" id="CHEBI:15378"/>
        <dbReference type="ChEBI" id="CHEBI:24646"/>
        <dbReference type="ChEBI" id="CHEBI:57540"/>
        <dbReference type="ChEBI" id="CHEBI:57945"/>
        <dbReference type="ChEBI" id="CHEBI:132124"/>
    </reaction>
</comment>
<comment type="cofactor">
    <cofactor evidence="2">
        <name>[4Fe-4S] cluster</name>
        <dbReference type="ChEBI" id="CHEBI:49883"/>
    </cofactor>
    <text evidence="2">Binds 1 [4Fe-4S] cluster.</text>
</comment>
<comment type="subunit">
    <text evidence="2">NDH-1 is composed of 14 different subunits. Subunits NuoB, C, D, E, F, and G constitute the peripheral sector of the complex.</text>
</comment>
<comment type="subcellular location">
    <subcellularLocation>
        <location evidence="2">Cell inner membrane</location>
        <topology evidence="2">Peripheral membrane protein</topology>
        <orientation evidence="2">Cytoplasmic side</orientation>
    </subcellularLocation>
</comment>
<comment type="similarity">
    <text evidence="2">Belongs to the complex I 20 kDa subunit family.</text>
</comment>
<comment type="sequence caution" evidence="3">
    <conflict type="erroneous initiation">
        <sequence resource="EMBL-CDS" id="AAM41800"/>
    </conflict>
</comment>
<organism>
    <name type="scientific">Xanthomonas campestris pv. campestris (strain ATCC 33913 / DSM 3586 / NCPPB 528 / LMG 568 / P 25)</name>
    <dbReference type="NCBI Taxonomy" id="190485"/>
    <lineage>
        <taxon>Bacteria</taxon>
        <taxon>Pseudomonadati</taxon>
        <taxon>Pseudomonadota</taxon>
        <taxon>Gammaproteobacteria</taxon>
        <taxon>Lysobacterales</taxon>
        <taxon>Lysobacteraceae</taxon>
        <taxon>Xanthomonas</taxon>
    </lineage>
</organism>
<name>NUOB_XANCP</name>
<feature type="chain" id="PRO_0000358509" description="NADH-quinone oxidoreductase subunit B">
    <location>
        <begin position="1"/>
        <end position="184"/>
    </location>
</feature>
<feature type="binding site" evidence="2">
    <location>
        <position position="63"/>
    </location>
    <ligand>
        <name>[4Fe-4S] cluster</name>
        <dbReference type="ChEBI" id="CHEBI:49883"/>
    </ligand>
</feature>
<feature type="binding site" evidence="2">
    <location>
        <position position="64"/>
    </location>
    <ligand>
        <name>[4Fe-4S] cluster</name>
        <dbReference type="ChEBI" id="CHEBI:49883"/>
    </ligand>
</feature>
<feature type="binding site" evidence="2">
    <location>
        <position position="128"/>
    </location>
    <ligand>
        <name>[4Fe-4S] cluster</name>
        <dbReference type="ChEBI" id="CHEBI:49883"/>
    </ligand>
</feature>
<feature type="binding site" evidence="2">
    <location>
        <position position="158"/>
    </location>
    <ligand>
        <name>[4Fe-4S] cluster</name>
        <dbReference type="ChEBI" id="CHEBI:49883"/>
    </ligand>
</feature>
<proteinExistence type="inferred from homology"/>
<accession>Q8P7T3</accession>
<dbReference type="EC" id="7.1.1.-" evidence="2"/>
<dbReference type="EMBL" id="AE008922">
    <property type="protein sequence ID" value="AAM41800.1"/>
    <property type="status" value="ALT_INIT"/>
    <property type="molecule type" value="Genomic_DNA"/>
</dbReference>
<dbReference type="RefSeq" id="NP_637876.1">
    <property type="nucleotide sequence ID" value="NC_003902.1"/>
</dbReference>
<dbReference type="RefSeq" id="WP_016944318.1">
    <property type="nucleotide sequence ID" value="NC_003902.1"/>
</dbReference>
<dbReference type="SMR" id="Q8P7T3"/>
<dbReference type="STRING" id="190485.XCC2527"/>
<dbReference type="EnsemblBacteria" id="AAM41800">
    <property type="protein sequence ID" value="AAM41800"/>
    <property type="gene ID" value="XCC2527"/>
</dbReference>
<dbReference type="KEGG" id="xcc:XCC2527"/>
<dbReference type="PATRIC" id="fig|190485.4.peg.2693"/>
<dbReference type="eggNOG" id="COG0377">
    <property type="taxonomic scope" value="Bacteria"/>
</dbReference>
<dbReference type="HOGENOM" id="CLU_055737_7_3_6"/>
<dbReference type="OrthoDB" id="9786737at2"/>
<dbReference type="Proteomes" id="UP000001010">
    <property type="component" value="Chromosome"/>
</dbReference>
<dbReference type="GO" id="GO:0005886">
    <property type="term" value="C:plasma membrane"/>
    <property type="evidence" value="ECO:0007669"/>
    <property type="project" value="UniProtKB-SubCell"/>
</dbReference>
<dbReference type="GO" id="GO:0045271">
    <property type="term" value="C:respiratory chain complex I"/>
    <property type="evidence" value="ECO:0000318"/>
    <property type="project" value="GO_Central"/>
</dbReference>
<dbReference type="GO" id="GO:0051539">
    <property type="term" value="F:4 iron, 4 sulfur cluster binding"/>
    <property type="evidence" value="ECO:0007669"/>
    <property type="project" value="UniProtKB-KW"/>
</dbReference>
<dbReference type="GO" id="GO:0005506">
    <property type="term" value="F:iron ion binding"/>
    <property type="evidence" value="ECO:0007669"/>
    <property type="project" value="UniProtKB-UniRule"/>
</dbReference>
<dbReference type="GO" id="GO:0008137">
    <property type="term" value="F:NADH dehydrogenase (ubiquinone) activity"/>
    <property type="evidence" value="ECO:0000318"/>
    <property type="project" value="GO_Central"/>
</dbReference>
<dbReference type="GO" id="GO:0050136">
    <property type="term" value="F:NADH:ubiquinone reductase (non-electrogenic) activity"/>
    <property type="evidence" value="ECO:0007669"/>
    <property type="project" value="UniProtKB-UniRule"/>
</dbReference>
<dbReference type="GO" id="GO:0048038">
    <property type="term" value="F:quinone binding"/>
    <property type="evidence" value="ECO:0007669"/>
    <property type="project" value="UniProtKB-KW"/>
</dbReference>
<dbReference type="GO" id="GO:0009060">
    <property type="term" value="P:aerobic respiration"/>
    <property type="evidence" value="ECO:0000318"/>
    <property type="project" value="GO_Central"/>
</dbReference>
<dbReference type="GO" id="GO:0015990">
    <property type="term" value="P:electron transport coupled proton transport"/>
    <property type="evidence" value="ECO:0000318"/>
    <property type="project" value="GO_Central"/>
</dbReference>
<dbReference type="FunFam" id="3.40.50.12280:FF:000001">
    <property type="entry name" value="NADH-quinone oxidoreductase subunit B 2"/>
    <property type="match status" value="1"/>
</dbReference>
<dbReference type="Gene3D" id="3.40.50.12280">
    <property type="match status" value="1"/>
</dbReference>
<dbReference type="HAMAP" id="MF_01356">
    <property type="entry name" value="NDH1_NuoB"/>
    <property type="match status" value="1"/>
</dbReference>
<dbReference type="InterPro" id="IPR006137">
    <property type="entry name" value="NADH_UbQ_OxRdtase-like_20kDa"/>
</dbReference>
<dbReference type="InterPro" id="IPR006138">
    <property type="entry name" value="NADH_UQ_OxRdtase_20Kd_su"/>
</dbReference>
<dbReference type="NCBIfam" id="TIGR01957">
    <property type="entry name" value="nuoB_fam"/>
    <property type="match status" value="1"/>
</dbReference>
<dbReference type="NCBIfam" id="NF005012">
    <property type="entry name" value="PRK06411.1"/>
    <property type="match status" value="1"/>
</dbReference>
<dbReference type="PANTHER" id="PTHR11995">
    <property type="entry name" value="NADH DEHYDROGENASE"/>
    <property type="match status" value="1"/>
</dbReference>
<dbReference type="PANTHER" id="PTHR11995:SF14">
    <property type="entry name" value="NADH DEHYDROGENASE [UBIQUINONE] IRON-SULFUR PROTEIN 7, MITOCHONDRIAL"/>
    <property type="match status" value="1"/>
</dbReference>
<dbReference type="Pfam" id="PF01058">
    <property type="entry name" value="Oxidored_q6"/>
    <property type="match status" value="1"/>
</dbReference>
<dbReference type="SUPFAM" id="SSF56770">
    <property type="entry name" value="HydA/Nqo6-like"/>
    <property type="match status" value="1"/>
</dbReference>
<dbReference type="PROSITE" id="PS01150">
    <property type="entry name" value="COMPLEX1_20K"/>
    <property type="match status" value="1"/>
</dbReference>
<sequence>MGVIQTLDRLMTNPMPEGRVEDILRPEGENPLLEKGYVTTSVDALLNWARTGSMWPMTFGLACCAVEMMHAGAARLDLDRYGVVFRPSPRQSDVMIVAGTLVNKMAPALRKVYDQMPDPKWVISMGSCANGGGYYHYSYSVVRGCDRIVPVDIYVPGCPPTAEALVYGILQLQKKIWRTQTIAR</sequence>
<evidence type="ECO:0000250" key="1"/>
<evidence type="ECO:0000255" key="2">
    <source>
        <dbReference type="HAMAP-Rule" id="MF_01356"/>
    </source>
</evidence>
<evidence type="ECO:0000305" key="3"/>
<reference key="1">
    <citation type="journal article" date="2002" name="Nature">
        <title>Comparison of the genomes of two Xanthomonas pathogens with differing host specificities.</title>
        <authorList>
            <person name="da Silva A.C.R."/>
            <person name="Ferro J.A."/>
            <person name="Reinach F.C."/>
            <person name="Farah C.S."/>
            <person name="Furlan L.R."/>
            <person name="Quaggio R.B."/>
            <person name="Monteiro-Vitorello C.B."/>
            <person name="Van Sluys M.A."/>
            <person name="Almeida N.F. Jr."/>
            <person name="Alves L.M.C."/>
            <person name="do Amaral A.M."/>
            <person name="Bertolini M.C."/>
            <person name="Camargo L.E.A."/>
            <person name="Camarotte G."/>
            <person name="Cannavan F."/>
            <person name="Cardozo J."/>
            <person name="Chambergo F."/>
            <person name="Ciapina L.P."/>
            <person name="Cicarelli R.M.B."/>
            <person name="Coutinho L.L."/>
            <person name="Cursino-Santos J.R."/>
            <person name="El-Dorry H."/>
            <person name="Faria J.B."/>
            <person name="Ferreira A.J.S."/>
            <person name="Ferreira R.C.C."/>
            <person name="Ferro M.I.T."/>
            <person name="Formighieri E.F."/>
            <person name="Franco M.C."/>
            <person name="Greggio C.C."/>
            <person name="Gruber A."/>
            <person name="Katsuyama A.M."/>
            <person name="Kishi L.T."/>
            <person name="Leite R.P."/>
            <person name="Lemos E.G.M."/>
            <person name="Lemos M.V.F."/>
            <person name="Locali E.C."/>
            <person name="Machado M.A."/>
            <person name="Madeira A.M.B.N."/>
            <person name="Martinez-Rossi N.M."/>
            <person name="Martins E.C."/>
            <person name="Meidanis J."/>
            <person name="Menck C.F.M."/>
            <person name="Miyaki C.Y."/>
            <person name="Moon D.H."/>
            <person name="Moreira L.M."/>
            <person name="Novo M.T.M."/>
            <person name="Okura V.K."/>
            <person name="Oliveira M.C."/>
            <person name="Oliveira V.R."/>
            <person name="Pereira H.A."/>
            <person name="Rossi A."/>
            <person name="Sena J.A.D."/>
            <person name="Silva C."/>
            <person name="de Souza R.F."/>
            <person name="Spinola L.A.F."/>
            <person name="Takita M.A."/>
            <person name="Tamura R.E."/>
            <person name="Teixeira E.C."/>
            <person name="Tezza R.I.D."/>
            <person name="Trindade dos Santos M."/>
            <person name="Truffi D."/>
            <person name="Tsai S.M."/>
            <person name="White F.F."/>
            <person name="Setubal J.C."/>
            <person name="Kitajima J.P."/>
        </authorList>
    </citation>
    <scope>NUCLEOTIDE SEQUENCE [LARGE SCALE GENOMIC DNA]</scope>
    <source>
        <strain>ATCC 33913 / DSM 3586 / NCPPB 528 / LMG 568 / P 25</strain>
    </source>
</reference>
<gene>
    <name evidence="2" type="primary">nuoB</name>
    <name type="ordered locus">XCC2527</name>
</gene>
<protein>
    <recommendedName>
        <fullName evidence="2">NADH-quinone oxidoreductase subunit B</fullName>
        <ecNumber evidence="2">7.1.1.-</ecNumber>
    </recommendedName>
    <alternativeName>
        <fullName evidence="2">NADH dehydrogenase I subunit B</fullName>
    </alternativeName>
    <alternativeName>
        <fullName evidence="2">NDH-1 subunit B</fullName>
    </alternativeName>
</protein>